<sequence>MTIAIYAGSFDPVTNGHIDVLKGALRLADQVIVAIGMHPGKKPLFSFDERVALIEASAKAVLHKDAARVSVIAFDGLVIDAARKHGAQLMVRGLRDGTDLDYEMQMAGMNGTMAPELQTVFLPADPAVRTITATLVRQIASMGGDIKPFVPVAVAAALNTKFKS</sequence>
<reference key="1">
    <citation type="journal article" date="2005" name="Infect. Immun.">
        <title>Whole-genome analyses of speciation events in pathogenic Brucellae.</title>
        <authorList>
            <person name="Chain P.S."/>
            <person name="Comerci D.J."/>
            <person name="Tolmasky M.E."/>
            <person name="Larimer F.W."/>
            <person name="Malfatti S.A."/>
            <person name="Vergez L.M."/>
            <person name="Aguero F."/>
            <person name="Land M.L."/>
            <person name="Ugalde R.A."/>
            <person name="Garcia E."/>
        </authorList>
    </citation>
    <scope>NUCLEOTIDE SEQUENCE [LARGE SCALE GENOMIC DNA]</scope>
    <source>
        <strain>2308</strain>
    </source>
</reference>
<dbReference type="EC" id="2.7.7.3" evidence="1"/>
<dbReference type="EMBL" id="AM040264">
    <property type="protein sequence ID" value="CAJ11075.1"/>
    <property type="molecule type" value="Genomic_DNA"/>
</dbReference>
<dbReference type="RefSeq" id="WP_002964224.1">
    <property type="nucleotide sequence ID" value="NZ_KN046823.1"/>
</dbReference>
<dbReference type="SMR" id="Q2YPY4"/>
<dbReference type="STRING" id="359391.BAB1_1119"/>
<dbReference type="GeneID" id="93016563"/>
<dbReference type="KEGG" id="bmf:BAB1_1119"/>
<dbReference type="PATRIC" id="fig|359391.11.peg.20"/>
<dbReference type="HOGENOM" id="CLU_100149_0_1_5"/>
<dbReference type="UniPathway" id="UPA00241">
    <property type="reaction ID" value="UER00355"/>
</dbReference>
<dbReference type="Proteomes" id="UP000002719">
    <property type="component" value="Chromosome I"/>
</dbReference>
<dbReference type="GO" id="GO:0005737">
    <property type="term" value="C:cytoplasm"/>
    <property type="evidence" value="ECO:0007669"/>
    <property type="project" value="UniProtKB-SubCell"/>
</dbReference>
<dbReference type="GO" id="GO:0005524">
    <property type="term" value="F:ATP binding"/>
    <property type="evidence" value="ECO:0007669"/>
    <property type="project" value="UniProtKB-KW"/>
</dbReference>
<dbReference type="GO" id="GO:0004595">
    <property type="term" value="F:pantetheine-phosphate adenylyltransferase activity"/>
    <property type="evidence" value="ECO:0007669"/>
    <property type="project" value="UniProtKB-UniRule"/>
</dbReference>
<dbReference type="GO" id="GO:0015937">
    <property type="term" value="P:coenzyme A biosynthetic process"/>
    <property type="evidence" value="ECO:0007669"/>
    <property type="project" value="UniProtKB-UniRule"/>
</dbReference>
<dbReference type="CDD" id="cd02163">
    <property type="entry name" value="PPAT"/>
    <property type="match status" value="1"/>
</dbReference>
<dbReference type="Gene3D" id="3.40.50.620">
    <property type="entry name" value="HUPs"/>
    <property type="match status" value="1"/>
</dbReference>
<dbReference type="HAMAP" id="MF_00151">
    <property type="entry name" value="PPAT_bact"/>
    <property type="match status" value="1"/>
</dbReference>
<dbReference type="InterPro" id="IPR004821">
    <property type="entry name" value="Cyt_trans-like"/>
</dbReference>
<dbReference type="InterPro" id="IPR001980">
    <property type="entry name" value="PPAT"/>
</dbReference>
<dbReference type="InterPro" id="IPR014729">
    <property type="entry name" value="Rossmann-like_a/b/a_fold"/>
</dbReference>
<dbReference type="NCBIfam" id="TIGR01510">
    <property type="entry name" value="coaD_prev_kdtB"/>
    <property type="match status" value="1"/>
</dbReference>
<dbReference type="NCBIfam" id="TIGR00125">
    <property type="entry name" value="cyt_tran_rel"/>
    <property type="match status" value="1"/>
</dbReference>
<dbReference type="PANTHER" id="PTHR21342">
    <property type="entry name" value="PHOSPHOPANTETHEINE ADENYLYLTRANSFERASE"/>
    <property type="match status" value="1"/>
</dbReference>
<dbReference type="PANTHER" id="PTHR21342:SF1">
    <property type="entry name" value="PHOSPHOPANTETHEINE ADENYLYLTRANSFERASE"/>
    <property type="match status" value="1"/>
</dbReference>
<dbReference type="Pfam" id="PF01467">
    <property type="entry name" value="CTP_transf_like"/>
    <property type="match status" value="1"/>
</dbReference>
<dbReference type="PRINTS" id="PR01020">
    <property type="entry name" value="LPSBIOSNTHSS"/>
</dbReference>
<dbReference type="SUPFAM" id="SSF52374">
    <property type="entry name" value="Nucleotidylyl transferase"/>
    <property type="match status" value="1"/>
</dbReference>
<name>COAD_BRUA2</name>
<organism>
    <name type="scientific">Brucella abortus (strain 2308)</name>
    <dbReference type="NCBI Taxonomy" id="359391"/>
    <lineage>
        <taxon>Bacteria</taxon>
        <taxon>Pseudomonadati</taxon>
        <taxon>Pseudomonadota</taxon>
        <taxon>Alphaproteobacteria</taxon>
        <taxon>Hyphomicrobiales</taxon>
        <taxon>Brucellaceae</taxon>
        <taxon>Brucella/Ochrobactrum group</taxon>
        <taxon>Brucella</taxon>
    </lineage>
</organism>
<feature type="chain" id="PRO_1000011100" description="Phosphopantetheine adenylyltransferase">
    <location>
        <begin position="1"/>
        <end position="164"/>
    </location>
</feature>
<feature type="binding site" evidence="1">
    <location>
        <begin position="9"/>
        <end position="10"/>
    </location>
    <ligand>
        <name>ATP</name>
        <dbReference type="ChEBI" id="CHEBI:30616"/>
    </ligand>
</feature>
<feature type="binding site" evidence="1">
    <location>
        <position position="9"/>
    </location>
    <ligand>
        <name>substrate</name>
    </ligand>
</feature>
<feature type="binding site" evidence="1">
    <location>
        <position position="17"/>
    </location>
    <ligand>
        <name>ATP</name>
        <dbReference type="ChEBI" id="CHEBI:30616"/>
    </ligand>
</feature>
<feature type="binding site" evidence="1">
    <location>
        <position position="41"/>
    </location>
    <ligand>
        <name>substrate</name>
    </ligand>
</feature>
<feature type="binding site" evidence="1">
    <location>
        <position position="78"/>
    </location>
    <ligand>
        <name>substrate</name>
    </ligand>
</feature>
<feature type="binding site" evidence="1">
    <location>
        <position position="92"/>
    </location>
    <ligand>
        <name>substrate</name>
    </ligand>
</feature>
<feature type="binding site" evidence="1">
    <location>
        <begin position="93"/>
        <end position="95"/>
    </location>
    <ligand>
        <name>ATP</name>
        <dbReference type="ChEBI" id="CHEBI:30616"/>
    </ligand>
</feature>
<feature type="binding site" evidence="1">
    <location>
        <position position="103"/>
    </location>
    <ligand>
        <name>ATP</name>
        <dbReference type="ChEBI" id="CHEBI:30616"/>
    </ligand>
</feature>
<feature type="binding site" evidence="1">
    <location>
        <begin position="128"/>
        <end position="134"/>
    </location>
    <ligand>
        <name>ATP</name>
        <dbReference type="ChEBI" id="CHEBI:30616"/>
    </ligand>
</feature>
<feature type="site" description="Transition state stabilizer" evidence="1">
    <location>
        <position position="17"/>
    </location>
</feature>
<protein>
    <recommendedName>
        <fullName evidence="1">Phosphopantetheine adenylyltransferase</fullName>
        <ecNumber evidence="1">2.7.7.3</ecNumber>
    </recommendedName>
    <alternativeName>
        <fullName evidence="1">Dephospho-CoA pyrophosphorylase</fullName>
    </alternativeName>
    <alternativeName>
        <fullName evidence="1">Pantetheine-phosphate adenylyltransferase</fullName>
        <shortName evidence="1">PPAT</shortName>
    </alternativeName>
</protein>
<proteinExistence type="inferred from homology"/>
<gene>
    <name evidence="1" type="primary">coaD</name>
    <name type="ordered locus">BAB1_1119</name>
</gene>
<keyword id="KW-0067">ATP-binding</keyword>
<keyword id="KW-0173">Coenzyme A biosynthesis</keyword>
<keyword id="KW-0963">Cytoplasm</keyword>
<keyword id="KW-0460">Magnesium</keyword>
<keyword id="KW-0547">Nucleotide-binding</keyword>
<keyword id="KW-0548">Nucleotidyltransferase</keyword>
<keyword id="KW-1185">Reference proteome</keyword>
<keyword id="KW-0808">Transferase</keyword>
<comment type="function">
    <text evidence="1">Reversibly transfers an adenylyl group from ATP to 4'-phosphopantetheine, yielding dephospho-CoA (dPCoA) and pyrophosphate.</text>
</comment>
<comment type="catalytic activity">
    <reaction evidence="1">
        <text>(R)-4'-phosphopantetheine + ATP + H(+) = 3'-dephospho-CoA + diphosphate</text>
        <dbReference type="Rhea" id="RHEA:19801"/>
        <dbReference type="ChEBI" id="CHEBI:15378"/>
        <dbReference type="ChEBI" id="CHEBI:30616"/>
        <dbReference type="ChEBI" id="CHEBI:33019"/>
        <dbReference type="ChEBI" id="CHEBI:57328"/>
        <dbReference type="ChEBI" id="CHEBI:61723"/>
        <dbReference type="EC" id="2.7.7.3"/>
    </reaction>
</comment>
<comment type="cofactor">
    <cofactor evidence="1">
        <name>Mg(2+)</name>
        <dbReference type="ChEBI" id="CHEBI:18420"/>
    </cofactor>
</comment>
<comment type="pathway">
    <text evidence="1">Cofactor biosynthesis; coenzyme A biosynthesis; CoA from (R)-pantothenate: step 4/5.</text>
</comment>
<comment type="subunit">
    <text evidence="1">Homohexamer.</text>
</comment>
<comment type="subcellular location">
    <subcellularLocation>
        <location evidence="1">Cytoplasm</location>
    </subcellularLocation>
</comment>
<comment type="similarity">
    <text evidence="1">Belongs to the bacterial CoaD family.</text>
</comment>
<accession>Q2YPY4</accession>
<evidence type="ECO:0000255" key="1">
    <source>
        <dbReference type="HAMAP-Rule" id="MF_00151"/>
    </source>
</evidence>